<evidence type="ECO:0000250" key="1"/>
<evidence type="ECO:0000255" key="2"/>
<evidence type="ECO:0000256" key="3">
    <source>
        <dbReference type="SAM" id="MobiDB-lite"/>
    </source>
</evidence>
<evidence type="ECO:0000305" key="4"/>
<dbReference type="EMBL" id="M30502">
    <property type="protein sequence ID" value="AAB00743.1"/>
    <property type="molecule type" value="Genomic_DNA"/>
</dbReference>
<dbReference type="RefSeq" id="NP_056844.1">
    <property type="nucleotide sequence ID" value="NC_001722.1"/>
</dbReference>
<dbReference type="SMR" id="P18094"/>
<dbReference type="BioGRID" id="1205553">
    <property type="interactions" value="2"/>
</dbReference>
<dbReference type="GlyCosmos" id="P18094">
    <property type="glycosylation" value="25 sites, No reported glycans"/>
</dbReference>
<dbReference type="KEGG" id="vg:1724717"/>
<dbReference type="Proteomes" id="UP000002242">
    <property type="component" value="Segment"/>
</dbReference>
<dbReference type="GO" id="GO:0044175">
    <property type="term" value="C:host cell endosome membrane"/>
    <property type="evidence" value="ECO:0007669"/>
    <property type="project" value="UniProtKB-SubCell"/>
</dbReference>
<dbReference type="GO" id="GO:0020002">
    <property type="term" value="C:host cell plasma membrane"/>
    <property type="evidence" value="ECO:0007669"/>
    <property type="project" value="UniProtKB-SubCell"/>
</dbReference>
<dbReference type="GO" id="GO:0016020">
    <property type="term" value="C:membrane"/>
    <property type="evidence" value="ECO:0007669"/>
    <property type="project" value="UniProtKB-KW"/>
</dbReference>
<dbReference type="GO" id="GO:0019031">
    <property type="term" value="C:viral envelope"/>
    <property type="evidence" value="ECO:0007669"/>
    <property type="project" value="UniProtKB-KW"/>
</dbReference>
<dbReference type="GO" id="GO:0055036">
    <property type="term" value="C:virion membrane"/>
    <property type="evidence" value="ECO:0007669"/>
    <property type="project" value="UniProtKB-SubCell"/>
</dbReference>
<dbReference type="GO" id="GO:0005198">
    <property type="term" value="F:structural molecule activity"/>
    <property type="evidence" value="ECO:0007669"/>
    <property type="project" value="InterPro"/>
</dbReference>
<dbReference type="GO" id="GO:0075512">
    <property type="term" value="P:clathrin-dependent endocytosis of virus by host cell"/>
    <property type="evidence" value="ECO:0007669"/>
    <property type="project" value="UniProtKB-KW"/>
</dbReference>
<dbReference type="GO" id="GO:0039654">
    <property type="term" value="P:fusion of virus membrane with host endosome membrane"/>
    <property type="evidence" value="ECO:0007669"/>
    <property type="project" value="UniProtKB-KW"/>
</dbReference>
<dbReference type="GO" id="GO:0052170">
    <property type="term" value="P:symbiont-mediated suppression of host innate immune response"/>
    <property type="evidence" value="ECO:0007669"/>
    <property type="project" value="UniProtKB-KW"/>
</dbReference>
<dbReference type="GO" id="GO:0039587">
    <property type="term" value="P:symbiont-mediated-mediated suppression of host tetherin activity"/>
    <property type="evidence" value="ECO:0007669"/>
    <property type="project" value="UniProtKB-KW"/>
</dbReference>
<dbReference type="GO" id="GO:0019062">
    <property type="term" value="P:virion attachment to host cell"/>
    <property type="evidence" value="ECO:0007669"/>
    <property type="project" value="UniProtKB-KW"/>
</dbReference>
<dbReference type="CDD" id="cd09909">
    <property type="entry name" value="HIV-1-like_HR1-HR2"/>
    <property type="match status" value="1"/>
</dbReference>
<dbReference type="Gene3D" id="1.10.287.210">
    <property type="match status" value="1"/>
</dbReference>
<dbReference type="Gene3D" id="2.170.40.20">
    <property type="entry name" value="Human immunodeficiency virus 1, Gp160, envelope glycoprotein"/>
    <property type="match status" value="2"/>
</dbReference>
<dbReference type="InterPro" id="IPR036377">
    <property type="entry name" value="Gp120_core_sf"/>
</dbReference>
<dbReference type="InterPro" id="IPR000328">
    <property type="entry name" value="GP41-like"/>
</dbReference>
<dbReference type="InterPro" id="IPR000777">
    <property type="entry name" value="HIV1_Gp120"/>
</dbReference>
<dbReference type="Pfam" id="PF00516">
    <property type="entry name" value="GP120"/>
    <property type="match status" value="1"/>
</dbReference>
<dbReference type="Pfam" id="PF00517">
    <property type="entry name" value="GP41"/>
    <property type="match status" value="1"/>
</dbReference>
<dbReference type="SUPFAM" id="SSF56502">
    <property type="entry name" value="gp120 core"/>
    <property type="match status" value="1"/>
</dbReference>
<dbReference type="SUPFAM" id="SSF58069">
    <property type="entry name" value="Virus ectodomain"/>
    <property type="match status" value="1"/>
</dbReference>
<feature type="signal peptide" evidence="2">
    <location>
        <begin position="1"/>
        <end position="22"/>
    </location>
</feature>
<feature type="chain" id="PRO_0000239496" description="Envelope glycoprotein gp160">
    <location>
        <begin position="23"/>
        <end position="860"/>
    </location>
</feature>
<feature type="chain" id="PRO_0000038435" description="Surface protein gp120" evidence="1">
    <location>
        <begin position="23"/>
        <end position="510"/>
    </location>
</feature>
<feature type="chain" id="PRO_0000038436" description="Transmembrane protein gp41" evidence="1">
    <location>
        <begin position="511"/>
        <end position="860"/>
    </location>
</feature>
<feature type="topological domain" description="Extracellular" evidence="2">
    <location>
        <begin position="23"/>
        <end position="678"/>
    </location>
</feature>
<feature type="transmembrane region" description="Helical" evidence="2">
    <location>
        <begin position="679"/>
        <end position="699"/>
    </location>
</feature>
<feature type="topological domain" description="Cytoplasmic" evidence="2">
    <location>
        <begin position="700"/>
        <end position="860"/>
    </location>
</feature>
<feature type="region of interest" description="V1">
    <location>
        <begin position="113"/>
        <end position="165"/>
    </location>
</feature>
<feature type="region of interest" description="Disordered" evidence="3">
    <location>
        <begin position="118"/>
        <end position="139"/>
    </location>
</feature>
<feature type="region of interest" description="V2">
    <location>
        <begin position="166"/>
        <end position="205"/>
    </location>
</feature>
<feature type="region of interest" description="V3">
    <location>
        <begin position="305"/>
        <end position="337"/>
    </location>
</feature>
<feature type="region of interest" description="V4">
    <location>
        <begin position="397"/>
        <end position="417"/>
    </location>
</feature>
<feature type="region of interest" description="V5">
    <location>
        <begin position="460"/>
        <end position="468"/>
    </location>
</feature>
<feature type="region of interest" description="Fusion peptide" evidence="2">
    <location>
        <begin position="511"/>
        <end position="531"/>
    </location>
</feature>
<feature type="region of interest" description="Immunosuppression" evidence="1">
    <location>
        <begin position="574"/>
        <end position="590"/>
    </location>
</feature>
<feature type="region of interest" description="MPER; binding to GalCer" evidence="1">
    <location>
        <begin position="656"/>
        <end position="677"/>
    </location>
</feature>
<feature type="coiled-coil region" evidence="2">
    <location>
        <begin position="623"/>
        <end position="644"/>
    </location>
</feature>
<feature type="short sequence motif" description="YXXV motif; contains endocytosis signal" evidence="1">
    <location>
        <begin position="706"/>
        <end position="709"/>
    </location>
</feature>
<feature type="short sequence motif" description="Di-leucine internalization motif" evidence="1">
    <location>
        <begin position="859"/>
        <end position="860"/>
    </location>
</feature>
<feature type="compositionally biased region" description="Low complexity" evidence="3">
    <location>
        <begin position="119"/>
        <end position="139"/>
    </location>
</feature>
<feature type="site" description="Cleavage; by host furin" evidence="1">
    <location>
        <begin position="510"/>
        <end position="511"/>
    </location>
</feature>
<feature type="lipid moiety-binding region" description="S-palmitoyl cysteine; by host" evidence="1">
    <location>
        <position position="772"/>
    </location>
</feature>
<feature type="glycosylation site" description="N-linked (GlcNAc...) asparagine; by host" evidence="2">
    <location>
        <position position="37"/>
    </location>
</feature>
<feature type="glycosylation site" description="N-linked (GlcNAc...) asparagine; by host" evidence="2">
    <location>
        <position position="70"/>
    </location>
</feature>
<feature type="glycosylation site" description="N-linked (GlcNAc...) asparagine; by host" evidence="2">
    <location>
        <position position="79"/>
    </location>
</feature>
<feature type="glycosylation site" description="N-linked (GlcNAc...) asparagine; by host" evidence="2">
    <location>
        <position position="112"/>
    </location>
</feature>
<feature type="glycosylation site" description="N-linked (GlcNAc...) asparagine; by host" evidence="2">
    <location>
        <position position="119"/>
    </location>
</feature>
<feature type="glycosylation site" description="N-linked (GlcNAc...) asparagine; by host" evidence="2">
    <location>
        <position position="144"/>
    </location>
</feature>
<feature type="glycosylation site" description="N-linked (GlcNAc...) asparagine; by host" evidence="2">
    <location>
        <position position="152"/>
    </location>
</feature>
<feature type="glycosylation site" description="N-linked (GlcNAc...) asparagine; by host" evidence="2">
    <location>
        <position position="194"/>
    </location>
</feature>
<feature type="glycosylation site" description="N-linked (GlcNAc...) asparagine; by host" evidence="2">
    <location>
        <position position="206"/>
    </location>
</feature>
<feature type="glycosylation site" description="N-linked (GlcNAc...) asparagine; by host" evidence="2">
    <location>
        <position position="238"/>
    </location>
</feature>
<feature type="glycosylation site" description="N-linked (GlcNAc...) asparagine; by host" evidence="2">
    <location>
        <position position="241"/>
    </location>
</feature>
<feature type="glycosylation site" description="N-linked (GlcNAc...) asparagine; by host" evidence="2">
    <location>
        <position position="272"/>
    </location>
</feature>
<feature type="glycosylation site" description="N-linked (GlcNAc...) asparagine; by host" evidence="2">
    <location>
        <position position="278"/>
    </location>
</feature>
<feature type="glycosylation site" description="N-linked (GlcNAc...) asparagine; by host" evidence="2">
    <location>
        <position position="289"/>
    </location>
</feature>
<feature type="glycosylation site" description="N-linked (GlcNAc...) asparagine; by host" evidence="2">
    <location>
        <position position="300"/>
    </location>
</feature>
<feature type="glycosylation site" description="N-linked (GlcNAc...) asparagine; by host" evidence="2">
    <location>
        <position position="310"/>
    </location>
</feature>
<feature type="glycosylation site" description="N-linked (GlcNAc...) asparagine; by host" evidence="2">
    <location>
        <position position="365"/>
    </location>
</feature>
<feature type="glycosylation site" description="N-linked (GlcNAc...) asparagine; by host" evidence="2">
    <location>
        <position position="371"/>
    </location>
</feature>
<feature type="glycosylation site" description="N-linked (GlcNAc...) asparagine; by host" evidence="2">
    <location>
        <position position="398"/>
    </location>
</feature>
<feature type="glycosylation site" description="N-linked (GlcNAc...) asparagine; by host" evidence="2">
    <location>
        <position position="410"/>
    </location>
</feature>
<feature type="glycosylation site" description="N-linked (GlcNAc...) asparagine; by host" evidence="2">
    <location>
        <position position="460"/>
    </location>
</feature>
<feature type="glycosylation site" description="N-linked (GlcNAc...) asparagine; by host" evidence="2">
    <location>
        <position position="465"/>
    </location>
</feature>
<feature type="glycosylation site" description="N-linked (GlcNAc...) asparagine; by host" evidence="2">
    <location>
        <position position="610"/>
    </location>
</feature>
<feature type="glycosylation site" description="N-linked (GlcNAc...) asparagine; by host" evidence="2">
    <location>
        <position position="619"/>
    </location>
</feature>
<feature type="glycosylation site" description="N-linked (GlcNAc...) asparagine; by host" evidence="2">
    <location>
        <position position="635"/>
    </location>
</feature>
<feature type="disulfide bond" evidence="1">
    <location>
        <begin position="44"/>
        <end position="57"/>
    </location>
</feature>
<feature type="disulfide bond" evidence="1">
    <location>
        <begin position="101"/>
        <end position="214"/>
    </location>
</feature>
<feature type="disulfide bond" evidence="1">
    <location>
        <begin position="108"/>
        <end position="205"/>
    </location>
</feature>
<feature type="disulfide bond" evidence="1">
    <location>
        <begin position="113"/>
        <end position="166"/>
    </location>
</feature>
<feature type="disulfide bond" evidence="1">
    <location>
        <begin position="227"/>
        <end position="257"/>
    </location>
</feature>
<feature type="disulfide bond" evidence="1">
    <location>
        <begin position="237"/>
        <end position="249"/>
    </location>
</feature>
<feature type="disulfide bond" evidence="1">
    <location>
        <begin position="305"/>
        <end position="338"/>
    </location>
</feature>
<feature type="disulfide bond" evidence="1">
    <location>
        <begin position="390"/>
        <end position="444"/>
    </location>
</feature>
<feature type="disulfide bond" evidence="1">
    <location>
        <begin position="397"/>
        <end position="417"/>
    </location>
</feature>
<protein>
    <recommendedName>
        <fullName>Envelope glycoprotein gp160</fullName>
    </recommendedName>
    <alternativeName>
        <fullName>Env polyprotein</fullName>
    </alternativeName>
    <component>
        <recommendedName>
            <fullName>Surface protein gp120</fullName>
            <shortName>SU</shortName>
        </recommendedName>
        <alternativeName>
            <fullName>Glycoprotein 120</fullName>
            <shortName>gp120</shortName>
        </alternativeName>
    </component>
    <component>
        <recommendedName>
            <fullName>Transmembrane protein gp41</fullName>
            <shortName>TM</shortName>
        </recommendedName>
        <alternativeName>
            <fullName>Glycoprotein 41</fullName>
            <shortName>gp41</shortName>
        </alternativeName>
    </component>
</protein>
<comment type="function">
    <text evidence="1">The surface protein gp120 (SU) attaches the virus to the host lymphoid cell by binding to the primary receptor CD4. This interaction induces a structural rearrangement creating a high affinity binding site for a chemokine coreceptor like CXCR4 and/or CCR5. This peculiar 2 stage receptor-interaction strategy allows gp120 to maintain the highly conserved coreceptor-binding site in a cryptic conformation, protected from neutralizing antibodies. Since CD4 also displays a binding site for the disulfide-isomerase P4HB/PDI, a P4HB/PDI-CD4-CXCR4-gp120 complex may form. In that complex, P4HB/PDI could reach and reduce gp120 disulfide bonds, causing major conformational changes in gp120. TXN, another PDI family member could also be involved in disulfide rearrangements in Env during fusion. These changes are transmitted to the transmembrane protein gp41 and are thought to activate its fusogenic potential by unmasking its fusion peptide (By similarity).</text>
</comment>
<comment type="function">
    <text evidence="1">The surface protein gp120 is a ligand for CD209/DC-SIGN and CLEC4M/DC-SIGNR, which are respectively found on dendritic cells (DCs), and on endothelial cells of liver sinusoids and lymph node sinuses. These interactions allow capture of viral particles at mucosal surfaces by these cells and subsequent transmission to permissive cells. DCs are professional antigen presenting cells, critical for host immunity by inducing specific immune responses against a broad variety of pathogens. They act as sentinels in various tissues where they take up antigen, process it, and present it to T-cells following migration to lymphoid organs. HIV subverts the migration properties of dendritic cells to gain access to CD4+ T-cells in lymph nodes. Virus transmission to permissive T-cells occurs either in trans (without DCs infection, through viral capture and transmission), or in cis (following DCs productive infection, through the usual CD4-gp120 interaction), thereby inducing a robust infection. In trans infection, bound virions remain infectious over days and it is proposed that they are not degraded, but protected in non-lysosomal acidic organelles within the DCs close to the cell membrane thus contributing to the viral infectious potential during DCs' migration from the periphery to the lymphoid tissues. On arrival at lymphoid tissues, intact virions recycle back to DCs' cell surface allowing virus transmission to CD4+ T-cells. Virion capture also seems to lead to MHC-II-restricted viral antigen presentation, and probably to the activation of HIV-specific CD4+ cells (By similarity).</text>
</comment>
<comment type="function">
    <text evidence="1">The transmembrane protein gp41 (TM) acts as a class I viral fusion protein. Under the current model, the protein has at least 3 conformational states: pre-fusion native state, pre-hairpin intermediate state, and post-fusion hairpin state. During fusion of viral and target intracellular membranes, the coiled coil regions (heptad repeats) assume a trimer-of-hairpins structure, positioning the fusion peptide in close proximity to the C-terminal region of the ectodomain. The formation of this structure appears to drive apposition and subsequent fusion of viral and target cell membranes. Complete fusion occurs in host cell endosomes and is dynamin-dependent, however some lipid transfer might occur at the plasma membrane. The virus undergoes clathrin-dependent internalization long before endosomal fusion, thus minimizing the surface exposure of conserved viral epitopes during fusion and reducing the efficacy of inhibitors targeting these epitopes. Membranes fusion leads to delivery of the nucleocapsid into the cytoplasm (By similarity).</text>
</comment>
<comment type="function">
    <text evidence="1">The envelope glycoprotein gp160 precursor down-modulates cell surface CD4 antigen by interacting with it in the endoplasmic reticulum and blocking its transport to the cell surface.</text>
</comment>
<comment type="function">
    <text evidence="1">The gp120-gp41 heterodimer seems to contribute to T-cell depletion during HIV-1 infection. The envelope glycoproteins expressed on the surface of infected cells induce apoptosis through an interaction with uninfected cells expressing the receptor (CD4) and the coreceptors CXCR4 or CCR5. This type of bystander killing may be obtained by at least three distinct mechanisms. First, the interaction between the 2 cells can induce cellular fusion followed by nuclear fusion within the syncytium. Syncytia are condemned to die from apoptosis. Second, the 2 interacting cells may not fuse entirely and simply exchange plasma membrane lipids, after a sort of hemifusion process, followed by rapid death. Third, it is possible that virus-infected cells, on the point of undergoing apoptosis, fuse with CD4-expressing cells, in which case apoptosis is rapidly transmitted from one cell to the other and thus occurs in a sort of contagious fashion (By similarity).</text>
</comment>
<comment type="function">
    <text evidence="1">The gp120-gp41 heterodimer allows rapid transcytosis of the virus through CD4 negative cells such as simple epithelial monolayers of the intestinal, rectal and endocervical epithelial barriers. Both gp120 and gp41 specifically recognize glycosphingolipids galactosyl-ceramide (GalCer) or 3' sulfo-galactosyl-ceramide (GalS) present in the lipid rafts structures of epithelial cells. Binding to these alternative receptors allows the rapid transcytosis of the virus through the epithelial cells. This transcytotic vesicle-mediated transport of virions from the apical side to the basolateral side of the epithelial cells does not involve infection of the cells themselves (By similarity).</text>
</comment>
<comment type="subunit">
    <molecule>Surface protein gp120</molecule>
    <text evidence="1">The mature envelope protein (Env) consists of a homotrimer of non-covalently associated gp120-gp41 heterodimers. The resulting complex protrudes from the virus surface as a spike. There seems to be as few as 10 spikes on the average virion. Interacts with human CD4, CCR5 and CXCR4, to form a P4HB/PDI-CD4-CXCR4-gp120 complex. Gp120 also interacts with the C-type lectins CD209/DC-SIGN and CLEC4M/DC-SIGNR (collectively referred to as DC-SIGN(R)). Gp120 and gp41 interact with GalCer (By similarity).</text>
</comment>
<comment type="subunit">
    <molecule>Transmembrane protein gp41</molecule>
    <text evidence="1">The mature envelope protein (Env) consists of a homotrimer of non-covalently associated gp120-gp41 heterodimers. The resulting complex protrudes from the virus surface as a spike. There seems to be as few as 10 spikes on the average virion.</text>
</comment>
<comment type="subcellular location">
    <molecule>Transmembrane protein gp41</molecule>
    <subcellularLocation>
        <location evidence="1">Virion membrane</location>
        <topology evidence="1">Single-pass type I membrane protein</topology>
    </subcellularLocation>
    <subcellularLocation>
        <location evidence="1">Host cell membrane</location>
        <topology evidence="1">Single-pass type I membrane protein</topology>
    </subcellularLocation>
    <subcellularLocation>
        <location evidence="4">Host endosome membrane</location>
        <topology evidence="4">Single-pass type I membrane protein</topology>
    </subcellularLocation>
    <text evidence="1">It is probably concentrated at the site of budding and incorporated into the virions possibly by contacts between the cytoplasmic tail of Env and the N-terminus of Gag.</text>
</comment>
<comment type="subcellular location">
    <molecule>Surface protein gp120</molecule>
    <subcellularLocation>
        <location evidence="1">Virion membrane</location>
        <topology evidence="1">Peripheral membrane protein</topology>
    </subcellularLocation>
    <subcellularLocation>
        <location evidence="1">Host cell membrane</location>
        <topology evidence="1">Peripheral membrane protein</topology>
    </subcellularLocation>
    <subcellularLocation>
        <location evidence="4">Host endosome membrane</location>
        <topology evidence="4">Peripheral membrane protein</topology>
    </subcellularLocation>
    <text evidence="1">The surface protein is not anchored to the viral envelope, but associates with the extravirion surface through its binding to TM. It is probably concentrated at the site of budding and incorporated into the virions possibly by contacts between the cytoplasmic tail of Env and the N-terminus of Gag (By similarity).</text>
</comment>
<comment type="domain">
    <text evidence="1">Some of the most genetically diverse regions of the viral genome are present in Env. They are called variable regions 1 through 5 (V1 through V5). Coreceptor usage of gp120 is determined mainly by the primary structure of the third variable region (V3) in the outer domain of gp120. Binding to CCR5 involves a region adjacent in addition to V3 (By similarity).</text>
</comment>
<comment type="domain">
    <text evidence="1">The 17 amino acids long immunosuppressive region is present in many retroviral envelope proteins. Synthetic peptides derived from this relatively conserved sequence inhibit immune function in vitro and in vivo (By similarity).</text>
</comment>
<comment type="PTM">
    <text evidence="1">Specific enzymatic cleavages in vivo yield mature proteins. Envelope glycoproteins are synthesized as an inactive precursor that is heavily N-glycosylated and processed likely by host cell furin in the Golgi to yield the mature SU and TM proteins. The cleavage site between SU and TM requires the minimal sequence [KR]-X-[KR]-R (By similarity).</text>
</comment>
<comment type="PTM">
    <text evidence="1">Palmitoylation of the transmembrane protein and of Env polyprotein (prior to its proteolytic cleavage) is essential for their association with host cell membrane lipid rafts. Palmitoylation is therefore required for envelope trafficking to classical lipid rafts, but not for viral replication (By similarity).</text>
</comment>
<comment type="miscellaneous">
    <text>Some HIV-2 isolates have been described that can infect cells independently of CD4, using CXCR4 as primary receptor. These isolates may have an exposed coreceptor binding site.</text>
</comment>
<comment type="miscellaneous">
    <text>This isolate is from a German AIDS patient (with predominantly neurological complications) who was probably infected in Mali.</text>
</comment>
<keyword id="KW-0014">AIDS</keyword>
<keyword id="KW-0053">Apoptosis</keyword>
<keyword id="KW-1165">Clathrin-mediated endocytosis of virus by host</keyword>
<keyword id="KW-0165">Cleavage on pair of basic residues</keyword>
<keyword id="KW-0175">Coiled coil</keyword>
<keyword id="KW-1015">Disulfide bond</keyword>
<keyword id="KW-1170">Fusion of virus membrane with host endosomal membrane</keyword>
<keyword id="KW-1168">Fusion of virus membrane with host membrane</keyword>
<keyword id="KW-0325">Glycoprotein</keyword>
<keyword id="KW-1032">Host cell membrane</keyword>
<keyword id="KW-1039">Host endosome</keyword>
<keyword id="KW-1043">Host membrane</keyword>
<keyword id="KW-0945">Host-virus interaction</keyword>
<keyword id="KW-1090">Inhibition of host innate immune response by virus</keyword>
<keyword id="KW-1084">Inhibition of host tetherin by virus</keyword>
<keyword id="KW-0449">Lipoprotein</keyword>
<keyword id="KW-0472">Membrane</keyword>
<keyword id="KW-0564">Palmitate</keyword>
<keyword id="KW-1185">Reference proteome</keyword>
<keyword id="KW-0732">Signal</keyword>
<keyword id="KW-0812">Transmembrane</keyword>
<keyword id="KW-1133">Transmembrane helix</keyword>
<keyword id="KW-1161">Viral attachment to host cell</keyword>
<keyword id="KW-0261">Viral envelope protein</keyword>
<keyword id="KW-0899">Viral immunoevasion</keyword>
<keyword id="KW-1162">Viral penetration into host cytoplasm</keyword>
<keyword id="KW-0946">Virion</keyword>
<keyword id="KW-1164">Virus endocytosis by host</keyword>
<keyword id="KW-1160">Virus entry into host cell</keyword>
<reference key="1">
    <citation type="journal article" date="1990" name="Virology">
        <title>A novel proviral clone of HIV-2: biological and phylogenetic relationship to other primate immunodeficiency viruses.</title>
        <authorList>
            <person name="Kirchhoff F."/>
            <person name="Jentsch K."/>
            <person name="Bachmann B."/>
            <person name="Stuke A."/>
            <person name="Laloux C."/>
            <person name="Lueke W."/>
            <person name="Stahl-Henning C."/>
            <person name="Schneider J."/>
            <person name="Nieselt K."/>
            <person name="Eigen M."/>
            <person name="Hunsmann G."/>
        </authorList>
    </citation>
    <scope>NUCLEOTIDE SEQUENCE [GENOMIC DNA]</scope>
</reference>
<reference key="2">
    <citation type="journal article" date="2002" name="J. Gen. Virol.">
        <title>Human immunodeficiency virus type 2.</title>
        <authorList>
            <person name="Reeves J.D."/>
            <person name="Doms R.W."/>
        </authorList>
    </citation>
    <scope>REVIEW</scope>
</reference>
<organismHost>
    <name type="scientific">Homo sapiens</name>
    <name type="common">Human</name>
    <dbReference type="NCBI Taxonomy" id="9606"/>
</organismHost>
<name>ENV_HV2BE</name>
<organism>
    <name type="scientific">Human immunodeficiency virus type 2 subtype A (isolate BEN)</name>
    <name type="common">HIV-2</name>
    <dbReference type="NCBI Taxonomy" id="11714"/>
    <lineage>
        <taxon>Viruses</taxon>
        <taxon>Riboviria</taxon>
        <taxon>Pararnavirae</taxon>
        <taxon>Artverviricota</taxon>
        <taxon>Revtraviricetes</taxon>
        <taxon>Ortervirales</taxon>
        <taxon>Retroviridae</taxon>
        <taxon>Orthoretrovirinae</taxon>
        <taxon>Lentivirus</taxon>
        <taxon>Human immunodeficiency virus 2</taxon>
    </lineage>
</organism>
<gene>
    <name type="primary">env</name>
</gene>
<proteinExistence type="inferred from homology"/>
<accession>P18094</accession>
<sequence length="860" mass="98931">MEPGRNQLFVVILLTSACLVYCSQYVTVFYGIPAWKNASIPLFCATKNRDTWGTIQCLPDNDDYQEIILNVTEAFDAWNNTVTEQAVEDVWHLFETSIKPCVKLTPLCVAMNCSRVQGNTTTPNPRTSSSTTSRPPTSAASIINETSNCIENNTCAGLGYEEMMQCEFNMKGLEQDKKRRYKDTWYLEDVVCDNTTAGTCYMRHCNTSIIKESCDKHYWDAMRFRYCAPPGFALLRCNDTNYSGFEPKCTKVVAASCTRMMETQTSTWFGFNGTRAENRTYIYWHGRDNRTIISLNKYYNLTMRCKRPGNKTVLPITLMSGLVFHSQPINTRPRQAWCRFGGRWREAMQEVKQTLVQHPRYKGINDTGKINFTKPGAGSDPEVAFMWTNCRGEFLYCNMTWFLNWVEDKNQTRRNYCHIKQIINTWHKVGKNVYLPPREGELACESTVTSIIANIDIDKNRTHTNITFSAEVAELYRLELGDYKLIEITPIGFAPTDQRRYSSTPVRNKRGVFVLGFLGFLATAGSAMGARSLTLSAQSRTLLAGIVQQQQQLLDVVKRQQEMLRLTVWGTKNLQARVTAIEKYLKHQAQLNSWGCAFRQVCHTTVPWVNDSLSPDWKNMTWQEWEKQVRYLEANISQSLEEAQIQQEKNMYELQKLNSWDILGNWFDLTSWVKYIQYGVHIVVGIIALRIAIYVVQLLSRFRKGYRPVFSSPPGYLQQIHIHKDRGQPANEGTEEDVGGDSGYDLWPWPINYVQFLIHLLTRLLIGLYNICRDLLSKNSPTRRLISQSLTAIRDWLRLKAAQLQYGCEWIQEAFQAFARTTRETLAGAWGWLWEAARRIGRGILAVPRRIRQGAELALL</sequence>